<reference key="1">
    <citation type="submission" date="2008-06" db="EMBL/GenBank/DDBJ databases">
        <title>Complete sequence of Chlorobaculum parvum NCIB 8327.</title>
        <authorList>
            <consortium name="US DOE Joint Genome Institute"/>
            <person name="Lucas S."/>
            <person name="Copeland A."/>
            <person name="Lapidus A."/>
            <person name="Glavina del Rio T."/>
            <person name="Dalin E."/>
            <person name="Tice H."/>
            <person name="Bruce D."/>
            <person name="Goodwin L."/>
            <person name="Pitluck S."/>
            <person name="Schmutz J."/>
            <person name="Larimer F."/>
            <person name="Land M."/>
            <person name="Hauser L."/>
            <person name="Kyrpides N."/>
            <person name="Mikhailova N."/>
            <person name="Zhao F."/>
            <person name="Li T."/>
            <person name="Liu Z."/>
            <person name="Overmann J."/>
            <person name="Bryant D.A."/>
            <person name="Richardson P."/>
        </authorList>
    </citation>
    <scope>NUCLEOTIDE SEQUENCE [LARGE SCALE GENOMIC DNA]</scope>
    <source>
        <strain>DSM 263 / NCIMB 8327</strain>
    </source>
</reference>
<accession>B3QN91</accession>
<evidence type="ECO:0000255" key="1">
    <source>
        <dbReference type="HAMAP-Rule" id="MF_00005"/>
    </source>
</evidence>
<keyword id="KW-0028">Amino-acid biosynthesis</keyword>
<keyword id="KW-0055">Arginine biosynthesis</keyword>
<keyword id="KW-0067">ATP-binding</keyword>
<keyword id="KW-0963">Cytoplasm</keyword>
<keyword id="KW-0436">Ligase</keyword>
<keyword id="KW-0547">Nucleotide-binding</keyword>
<organism>
    <name type="scientific">Chlorobaculum parvum (strain DSM 263 / NCIMB 8327)</name>
    <name type="common">Chlorobium vibrioforme subsp. thiosulfatophilum</name>
    <dbReference type="NCBI Taxonomy" id="517417"/>
    <lineage>
        <taxon>Bacteria</taxon>
        <taxon>Pseudomonadati</taxon>
        <taxon>Chlorobiota</taxon>
        <taxon>Chlorobiia</taxon>
        <taxon>Chlorobiales</taxon>
        <taxon>Chlorobiaceae</taxon>
        <taxon>Chlorobaculum</taxon>
    </lineage>
</organism>
<feature type="chain" id="PRO_1000089027" description="Argininosuccinate synthase">
    <location>
        <begin position="1"/>
        <end position="401"/>
    </location>
</feature>
<feature type="binding site" evidence="1">
    <location>
        <begin position="9"/>
        <end position="17"/>
    </location>
    <ligand>
        <name>ATP</name>
        <dbReference type="ChEBI" id="CHEBI:30616"/>
    </ligand>
</feature>
<feature type="binding site" evidence="1">
    <location>
        <position position="88"/>
    </location>
    <ligand>
        <name>L-citrulline</name>
        <dbReference type="ChEBI" id="CHEBI:57743"/>
    </ligand>
</feature>
<feature type="binding site" evidence="1">
    <location>
        <position position="118"/>
    </location>
    <ligand>
        <name>ATP</name>
        <dbReference type="ChEBI" id="CHEBI:30616"/>
    </ligand>
</feature>
<feature type="binding site" evidence="1">
    <location>
        <position position="120"/>
    </location>
    <ligand>
        <name>L-aspartate</name>
        <dbReference type="ChEBI" id="CHEBI:29991"/>
    </ligand>
</feature>
<feature type="binding site" evidence="1">
    <location>
        <position position="124"/>
    </location>
    <ligand>
        <name>L-aspartate</name>
        <dbReference type="ChEBI" id="CHEBI:29991"/>
    </ligand>
</feature>
<feature type="binding site" evidence="1">
    <location>
        <position position="124"/>
    </location>
    <ligand>
        <name>L-citrulline</name>
        <dbReference type="ChEBI" id="CHEBI:57743"/>
    </ligand>
</feature>
<feature type="binding site" evidence="1">
    <location>
        <position position="125"/>
    </location>
    <ligand>
        <name>L-aspartate</name>
        <dbReference type="ChEBI" id="CHEBI:29991"/>
    </ligand>
</feature>
<feature type="binding site" evidence="1">
    <location>
        <position position="128"/>
    </location>
    <ligand>
        <name>L-citrulline</name>
        <dbReference type="ChEBI" id="CHEBI:57743"/>
    </ligand>
</feature>
<feature type="binding site" evidence="1">
    <location>
        <position position="177"/>
    </location>
    <ligand>
        <name>L-citrulline</name>
        <dbReference type="ChEBI" id="CHEBI:57743"/>
    </ligand>
</feature>
<feature type="binding site" evidence="1">
    <location>
        <position position="186"/>
    </location>
    <ligand>
        <name>L-citrulline</name>
        <dbReference type="ChEBI" id="CHEBI:57743"/>
    </ligand>
</feature>
<feature type="binding site" evidence="1">
    <location>
        <position position="262"/>
    </location>
    <ligand>
        <name>L-citrulline</name>
        <dbReference type="ChEBI" id="CHEBI:57743"/>
    </ligand>
</feature>
<feature type="binding site" evidence="1">
    <location>
        <position position="274"/>
    </location>
    <ligand>
        <name>L-citrulline</name>
        <dbReference type="ChEBI" id="CHEBI:57743"/>
    </ligand>
</feature>
<sequence length="401" mass="44304">MSKEKIAVAYSGGLDTSVMIKWLKDKYEGAEIVAVTGNLGQKMEVDNLEPKALATGAASFHFVDLRKTFVEDCIWKALKAGALYEDVYPLATALGRPILAKALVDVALAEGCTMLTHGCTGKGNDQVRFEVTFASLAPHMKVVAPLREWEFTSREQEITYALEHNIPVSATKKNPYSIDENIWGISIECGVLEDPMVPPPADAYQITTSPEEAPDKPTVVDIDFVEGIPVALDGQQMEGLDLIVKLNELGAMNGVGRLDMIENRVVGIKSREIYEAPAATILHFAHRELERLTLEKSVFQYKRNIGQDYANIIYNGTWFSPMREALDAFVDVTQKPVTGMVRLKLYKGNVTLLGRTSPNSLYNEELATYTEADTFNHKAAEGFIQLYGLGLKTYSEVNLGK</sequence>
<name>ASSY_CHLP8</name>
<dbReference type="EC" id="6.3.4.5" evidence="1"/>
<dbReference type="EMBL" id="CP001099">
    <property type="protein sequence ID" value="ACF11394.1"/>
    <property type="molecule type" value="Genomic_DNA"/>
</dbReference>
<dbReference type="RefSeq" id="WP_012502227.1">
    <property type="nucleotide sequence ID" value="NC_011027.1"/>
</dbReference>
<dbReference type="SMR" id="B3QN91"/>
<dbReference type="STRING" id="517417.Cpar_0986"/>
<dbReference type="KEGG" id="cpc:Cpar_0986"/>
<dbReference type="eggNOG" id="COG0137">
    <property type="taxonomic scope" value="Bacteria"/>
</dbReference>
<dbReference type="HOGENOM" id="CLU_032784_4_2_10"/>
<dbReference type="OrthoDB" id="9801641at2"/>
<dbReference type="UniPathway" id="UPA00068">
    <property type="reaction ID" value="UER00113"/>
</dbReference>
<dbReference type="Proteomes" id="UP000008811">
    <property type="component" value="Chromosome"/>
</dbReference>
<dbReference type="GO" id="GO:0005737">
    <property type="term" value="C:cytoplasm"/>
    <property type="evidence" value="ECO:0007669"/>
    <property type="project" value="UniProtKB-SubCell"/>
</dbReference>
<dbReference type="GO" id="GO:0004055">
    <property type="term" value="F:argininosuccinate synthase activity"/>
    <property type="evidence" value="ECO:0007669"/>
    <property type="project" value="UniProtKB-UniRule"/>
</dbReference>
<dbReference type="GO" id="GO:0005524">
    <property type="term" value="F:ATP binding"/>
    <property type="evidence" value="ECO:0007669"/>
    <property type="project" value="UniProtKB-UniRule"/>
</dbReference>
<dbReference type="GO" id="GO:0000053">
    <property type="term" value="P:argininosuccinate metabolic process"/>
    <property type="evidence" value="ECO:0007669"/>
    <property type="project" value="TreeGrafter"/>
</dbReference>
<dbReference type="GO" id="GO:0006526">
    <property type="term" value="P:L-arginine biosynthetic process"/>
    <property type="evidence" value="ECO:0007669"/>
    <property type="project" value="UniProtKB-UniRule"/>
</dbReference>
<dbReference type="GO" id="GO:0000050">
    <property type="term" value="P:urea cycle"/>
    <property type="evidence" value="ECO:0007669"/>
    <property type="project" value="TreeGrafter"/>
</dbReference>
<dbReference type="CDD" id="cd01999">
    <property type="entry name" value="ASS"/>
    <property type="match status" value="1"/>
</dbReference>
<dbReference type="FunFam" id="3.40.50.620:FF:000019">
    <property type="entry name" value="Argininosuccinate synthase"/>
    <property type="match status" value="1"/>
</dbReference>
<dbReference type="FunFam" id="3.90.1260.10:FF:000007">
    <property type="entry name" value="Argininosuccinate synthase"/>
    <property type="match status" value="1"/>
</dbReference>
<dbReference type="Gene3D" id="3.90.1260.10">
    <property type="entry name" value="Argininosuccinate synthetase, chain A, domain 2"/>
    <property type="match status" value="1"/>
</dbReference>
<dbReference type="Gene3D" id="3.40.50.620">
    <property type="entry name" value="HUPs"/>
    <property type="match status" value="1"/>
</dbReference>
<dbReference type="Gene3D" id="1.20.5.470">
    <property type="entry name" value="Single helix bin"/>
    <property type="match status" value="1"/>
</dbReference>
<dbReference type="HAMAP" id="MF_00005">
    <property type="entry name" value="Arg_succ_synth_type1"/>
    <property type="match status" value="1"/>
</dbReference>
<dbReference type="InterPro" id="IPR048268">
    <property type="entry name" value="Arginosuc_syn_C"/>
</dbReference>
<dbReference type="InterPro" id="IPR048267">
    <property type="entry name" value="Arginosuc_syn_N"/>
</dbReference>
<dbReference type="InterPro" id="IPR001518">
    <property type="entry name" value="Arginosuc_synth"/>
</dbReference>
<dbReference type="InterPro" id="IPR018223">
    <property type="entry name" value="Arginosuc_synth_CS"/>
</dbReference>
<dbReference type="InterPro" id="IPR023434">
    <property type="entry name" value="Arginosuc_synth_type_1_subfam"/>
</dbReference>
<dbReference type="InterPro" id="IPR024074">
    <property type="entry name" value="AS_cat/multimer_dom_body"/>
</dbReference>
<dbReference type="InterPro" id="IPR014729">
    <property type="entry name" value="Rossmann-like_a/b/a_fold"/>
</dbReference>
<dbReference type="NCBIfam" id="TIGR00032">
    <property type="entry name" value="argG"/>
    <property type="match status" value="1"/>
</dbReference>
<dbReference type="NCBIfam" id="NF001770">
    <property type="entry name" value="PRK00509.1"/>
    <property type="match status" value="1"/>
</dbReference>
<dbReference type="PANTHER" id="PTHR11587">
    <property type="entry name" value="ARGININOSUCCINATE SYNTHASE"/>
    <property type="match status" value="1"/>
</dbReference>
<dbReference type="PANTHER" id="PTHR11587:SF2">
    <property type="entry name" value="ARGININOSUCCINATE SYNTHASE"/>
    <property type="match status" value="1"/>
</dbReference>
<dbReference type="Pfam" id="PF20979">
    <property type="entry name" value="Arginosuc_syn_C"/>
    <property type="match status" value="1"/>
</dbReference>
<dbReference type="Pfam" id="PF00764">
    <property type="entry name" value="Arginosuc_synth"/>
    <property type="match status" value="1"/>
</dbReference>
<dbReference type="SUPFAM" id="SSF52402">
    <property type="entry name" value="Adenine nucleotide alpha hydrolases-like"/>
    <property type="match status" value="1"/>
</dbReference>
<dbReference type="SUPFAM" id="SSF69864">
    <property type="entry name" value="Argininosuccinate synthetase, C-terminal domain"/>
    <property type="match status" value="1"/>
</dbReference>
<dbReference type="PROSITE" id="PS00564">
    <property type="entry name" value="ARGININOSUCCIN_SYN_1"/>
    <property type="match status" value="1"/>
</dbReference>
<dbReference type="PROSITE" id="PS00565">
    <property type="entry name" value="ARGININOSUCCIN_SYN_2"/>
    <property type="match status" value="1"/>
</dbReference>
<proteinExistence type="inferred from homology"/>
<protein>
    <recommendedName>
        <fullName evidence="1">Argininosuccinate synthase</fullName>
        <ecNumber evidence="1">6.3.4.5</ecNumber>
    </recommendedName>
    <alternativeName>
        <fullName evidence="1">Citrulline--aspartate ligase</fullName>
    </alternativeName>
</protein>
<comment type="catalytic activity">
    <reaction evidence="1">
        <text>L-citrulline + L-aspartate + ATP = 2-(N(omega)-L-arginino)succinate + AMP + diphosphate + H(+)</text>
        <dbReference type="Rhea" id="RHEA:10932"/>
        <dbReference type="ChEBI" id="CHEBI:15378"/>
        <dbReference type="ChEBI" id="CHEBI:29991"/>
        <dbReference type="ChEBI" id="CHEBI:30616"/>
        <dbReference type="ChEBI" id="CHEBI:33019"/>
        <dbReference type="ChEBI" id="CHEBI:57472"/>
        <dbReference type="ChEBI" id="CHEBI:57743"/>
        <dbReference type="ChEBI" id="CHEBI:456215"/>
        <dbReference type="EC" id="6.3.4.5"/>
    </reaction>
</comment>
<comment type="pathway">
    <text evidence="1">Amino-acid biosynthesis; L-arginine biosynthesis; L-arginine from L-ornithine and carbamoyl phosphate: step 2/3.</text>
</comment>
<comment type="subunit">
    <text evidence="1">Homotetramer.</text>
</comment>
<comment type="subcellular location">
    <subcellularLocation>
        <location evidence="1">Cytoplasm</location>
    </subcellularLocation>
</comment>
<comment type="similarity">
    <text evidence="1">Belongs to the argininosuccinate synthase family. Type 1 subfamily.</text>
</comment>
<gene>
    <name evidence="1" type="primary">argG</name>
    <name type="ordered locus">Cpar_0986</name>
</gene>